<protein>
    <recommendedName>
        <fullName evidence="1">Cell division protein FtsA</fullName>
    </recommendedName>
</protein>
<sequence length="414" mass="44061">MEQQQRYISVLDIGTSKVLALIGEVQDDDKINIVGLGQAPSRGLRAGMVTNIDATVQAIRQAVNDAELMADTKITHVTTGIAGNHIRSLNSQGVVKIKDGEVTQADIDRAIETAKAINIPPDQKILDAVVQDYIIDTQLGVREPIGMSGVRLDTRVHIITGASTAVQNVQKCIERCGLKSDQIMLQPLASGQAVLTEDEKDLGVCVIDIGGGTTDIAVYMNGAIRHTSVIPAGGNLITKDLSKSLRTPLDAAEYIKIHYGVASCDTEGLGEMIEVPGVGDRTSRQVSSKVLAAIISARIQEIFGVVLGELQKSGFPKEVLNAGIVLTGGVSMMTGIVEFAEKIFDLPVRTGAPQEMGGLSDRVRTPRFSTAIGLLHAACKLEGNLPQPENGAVQEREGGGGLLARLKRWIENSF</sequence>
<dbReference type="EMBL" id="AE002098">
    <property type="protein sequence ID" value="AAF40864.1"/>
    <property type="molecule type" value="Genomic_DNA"/>
</dbReference>
<dbReference type="PIR" id="E81201">
    <property type="entry name" value="E81201"/>
</dbReference>
<dbReference type="RefSeq" id="NP_273474.1">
    <property type="nucleotide sequence ID" value="NC_003112.2"/>
</dbReference>
<dbReference type="RefSeq" id="WP_002216537.1">
    <property type="nucleotide sequence ID" value="NC_003112.2"/>
</dbReference>
<dbReference type="SMR" id="Q9K0X8"/>
<dbReference type="FunCoup" id="Q9K0X8">
    <property type="interactions" value="206"/>
</dbReference>
<dbReference type="STRING" id="122586.NMB0426"/>
<dbReference type="PaxDb" id="122586-NMB0426"/>
<dbReference type="KEGG" id="nme:NMB0426"/>
<dbReference type="PATRIC" id="fig|122586.8.peg.540"/>
<dbReference type="HOGENOM" id="CLU_037850_3_2_4"/>
<dbReference type="InParanoid" id="Q9K0X8"/>
<dbReference type="OrthoDB" id="9810567at2"/>
<dbReference type="Proteomes" id="UP000000425">
    <property type="component" value="Chromosome"/>
</dbReference>
<dbReference type="GO" id="GO:0032153">
    <property type="term" value="C:cell division site"/>
    <property type="evidence" value="ECO:0000318"/>
    <property type="project" value="GO_Central"/>
</dbReference>
<dbReference type="GO" id="GO:0009898">
    <property type="term" value="C:cytoplasmic side of plasma membrane"/>
    <property type="evidence" value="ECO:0000318"/>
    <property type="project" value="GO_Central"/>
</dbReference>
<dbReference type="GO" id="GO:0051301">
    <property type="term" value="P:cell division"/>
    <property type="evidence" value="ECO:0000318"/>
    <property type="project" value="GO_Central"/>
</dbReference>
<dbReference type="GO" id="GO:0043093">
    <property type="term" value="P:FtsZ-dependent cytokinesis"/>
    <property type="evidence" value="ECO:0007669"/>
    <property type="project" value="UniProtKB-UniRule"/>
</dbReference>
<dbReference type="CDD" id="cd24048">
    <property type="entry name" value="ASKHA_NBD_FtsA"/>
    <property type="match status" value="1"/>
</dbReference>
<dbReference type="FunFam" id="3.30.1490.110:FF:000001">
    <property type="entry name" value="Cell division protein FtsA"/>
    <property type="match status" value="1"/>
</dbReference>
<dbReference type="Gene3D" id="3.30.1490.110">
    <property type="match status" value="1"/>
</dbReference>
<dbReference type="Gene3D" id="3.30.420.40">
    <property type="match status" value="2"/>
</dbReference>
<dbReference type="HAMAP" id="MF_02033">
    <property type="entry name" value="FtsA"/>
    <property type="match status" value="1"/>
</dbReference>
<dbReference type="InterPro" id="IPR043129">
    <property type="entry name" value="ATPase_NBD"/>
</dbReference>
<dbReference type="InterPro" id="IPR020823">
    <property type="entry name" value="Cell_div_FtsA"/>
</dbReference>
<dbReference type="InterPro" id="IPR050696">
    <property type="entry name" value="FtsA/MreB"/>
</dbReference>
<dbReference type="InterPro" id="IPR003494">
    <property type="entry name" value="SHS2_FtsA"/>
</dbReference>
<dbReference type="NCBIfam" id="TIGR01174">
    <property type="entry name" value="ftsA"/>
    <property type="match status" value="1"/>
</dbReference>
<dbReference type="PANTHER" id="PTHR32432:SF4">
    <property type="entry name" value="CELL DIVISION PROTEIN FTSA"/>
    <property type="match status" value="1"/>
</dbReference>
<dbReference type="PANTHER" id="PTHR32432">
    <property type="entry name" value="CELL DIVISION PROTEIN FTSA-RELATED"/>
    <property type="match status" value="1"/>
</dbReference>
<dbReference type="Pfam" id="PF14450">
    <property type="entry name" value="FtsA"/>
    <property type="match status" value="2"/>
</dbReference>
<dbReference type="Pfam" id="PF02491">
    <property type="entry name" value="SHS2_FTSA"/>
    <property type="match status" value="1"/>
</dbReference>
<dbReference type="PIRSF" id="PIRSF003101">
    <property type="entry name" value="FtsA"/>
    <property type="match status" value="1"/>
</dbReference>
<dbReference type="SMART" id="SM00842">
    <property type="entry name" value="FtsA"/>
    <property type="match status" value="1"/>
</dbReference>
<dbReference type="SUPFAM" id="SSF53067">
    <property type="entry name" value="Actin-like ATPase domain"/>
    <property type="match status" value="2"/>
</dbReference>
<keyword id="KW-0131">Cell cycle</keyword>
<keyword id="KW-0132">Cell division</keyword>
<keyword id="KW-0997">Cell inner membrane</keyword>
<keyword id="KW-1003">Cell membrane</keyword>
<keyword id="KW-0472">Membrane</keyword>
<keyword id="KW-1185">Reference proteome</keyword>
<accession>Q9K0X8</accession>
<organism>
    <name type="scientific">Neisseria meningitidis serogroup B (strain ATCC BAA-335 / MC58)</name>
    <dbReference type="NCBI Taxonomy" id="122586"/>
    <lineage>
        <taxon>Bacteria</taxon>
        <taxon>Pseudomonadati</taxon>
        <taxon>Pseudomonadota</taxon>
        <taxon>Betaproteobacteria</taxon>
        <taxon>Neisseriales</taxon>
        <taxon>Neisseriaceae</taxon>
        <taxon>Neisseria</taxon>
    </lineage>
</organism>
<comment type="function">
    <text evidence="1">Cell division protein that is involved in the assembly of the Z ring. May serve as a membrane anchor for the Z ring.</text>
</comment>
<comment type="subunit">
    <text evidence="1">Self-interacts. Interacts with FtsZ.</text>
</comment>
<comment type="subcellular location">
    <subcellularLocation>
        <location evidence="1">Cell inner membrane</location>
        <topology evidence="1">Peripheral membrane protein</topology>
        <orientation evidence="1">Cytoplasmic side</orientation>
    </subcellularLocation>
    <text evidence="1">Localizes to the Z ring in an FtsZ-dependent manner. Targeted to the membrane through a conserved C-terminal amphipathic helix.</text>
</comment>
<comment type="miscellaneous">
    <text>Present in outer membrane vesicle formulations which are used as vaccines in human.</text>
</comment>
<comment type="similarity">
    <text evidence="1">Belongs to the FtsA/MreB family.</text>
</comment>
<gene>
    <name evidence="1" type="primary">ftsA</name>
    <name type="ordered locus">NMB0426</name>
</gene>
<name>FTSA_NEIMB</name>
<evidence type="ECO:0000255" key="1">
    <source>
        <dbReference type="HAMAP-Rule" id="MF_02033"/>
    </source>
</evidence>
<proteinExistence type="evidence at protein level"/>
<reference key="1">
    <citation type="journal article" date="2000" name="Science">
        <title>Complete genome sequence of Neisseria meningitidis serogroup B strain MC58.</title>
        <authorList>
            <person name="Tettelin H."/>
            <person name="Saunders N.J."/>
            <person name="Heidelberg J.F."/>
            <person name="Jeffries A.C."/>
            <person name="Nelson K.E."/>
            <person name="Eisen J.A."/>
            <person name="Ketchum K.A."/>
            <person name="Hood D.W."/>
            <person name="Peden J.F."/>
            <person name="Dodson R.J."/>
            <person name="Nelson W.C."/>
            <person name="Gwinn M.L."/>
            <person name="DeBoy R.T."/>
            <person name="Peterson J.D."/>
            <person name="Hickey E.K."/>
            <person name="Haft D.H."/>
            <person name="Salzberg S.L."/>
            <person name="White O."/>
            <person name="Fleischmann R.D."/>
            <person name="Dougherty B.A."/>
            <person name="Mason T.M."/>
            <person name="Ciecko A."/>
            <person name="Parksey D.S."/>
            <person name="Blair E."/>
            <person name="Cittone H."/>
            <person name="Clark E.B."/>
            <person name="Cotton M.D."/>
            <person name="Utterback T.R."/>
            <person name="Khouri H.M."/>
            <person name="Qin H."/>
            <person name="Vamathevan J.J."/>
            <person name="Gill J."/>
            <person name="Scarlato V."/>
            <person name="Masignani V."/>
            <person name="Pizza M."/>
            <person name="Grandi G."/>
            <person name="Sun L."/>
            <person name="Smith H.O."/>
            <person name="Fraser C.M."/>
            <person name="Moxon E.R."/>
            <person name="Rappuoli R."/>
            <person name="Venter J.C."/>
        </authorList>
    </citation>
    <scope>NUCLEOTIDE SEQUENCE [LARGE SCALE GENOMIC DNA]</scope>
    <source>
        <strain>ATCC BAA-335 / MC58</strain>
    </source>
</reference>
<reference key="2">
    <citation type="journal article" date="2006" name="Proteomics">
        <title>Proteomic analysis of a meningococcal outer membrane vesicle vaccine prepared from the group B strain NZ98/254.</title>
        <authorList>
            <person name="Vipond C."/>
            <person name="Suker J."/>
            <person name="Jones C."/>
            <person name="Tang C."/>
            <person name="Feavers I.M."/>
            <person name="Wheeler J.X."/>
        </authorList>
    </citation>
    <scope>IDENTIFICATION BY MASS SPECTROMETRY [LARGE SCALE ANALYSIS]</scope>
    <source>
        <strain>NZ98/254 / Serogroup B</strain>
    </source>
</reference>
<feature type="chain" id="PRO_0000320267" description="Cell division protein FtsA">
    <location>
        <begin position="1"/>
        <end position="414"/>
    </location>
</feature>